<accession>P10889</accession>
<organism>
    <name type="scientific">Mus musculus</name>
    <name type="common">Mouse</name>
    <dbReference type="NCBI Taxonomy" id="10090"/>
    <lineage>
        <taxon>Eukaryota</taxon>
        <taxon>Metazoa</taxon>
        <taxon>Chordata</taxon>
        <taxon>Craniata</taxon>
        <taxon>Vertebrata</taxon>
        <taxon>Euteleostomi</taxon>
        <taxon>Mammalia</taxon>
        <taxon>Eutheria</taxon>
        <taxon>Euarchontoglires</taxon>
        <taxon>Glires</taxon>
        <taxon>Rodentia</taxon>
        <taxon>Myomorpha</taxon>
        <taxon>Muroidea</taxon>
        <taxon>Muridae</taxon>
        <taxon>Murinae</taxon>
        <taxon>Mus</taxon>
        <taxon>Mus</taxon>
    </lineage>
</organism>
<dbReference type="EMBL" id="X53798">
    <property type="protein sequence ID" value="CAA37807.1"/>
    <property type="molecule type" value="mRNA"/>
</dbReference>
<dbReference type="CCDS" id="CCDS39144.1"/>
<dbReference type="PIR" id="JH0200">
    <property type="entry name" value="JH0200"/>
</dbReference>
<dbReference type="RefSeq" id="NP_033166.1">
    <property type="nucleotide sequence ID" value="NM_009140.2"/>
</dbReference>
<dbReference type="PDB" id="1MI2">
    <property type="method" value="NMR"/>
    <property type="chains" value="A/B=28-100"/>
</dbReference>
<dbReference type="PDB" id="3N52">
    <property type="method" value="X-ray"/>
    <property type="resolution" value="1.90 A"/>
    <property type="chains" value="A/B/C/D=28-100"/>
</dbReference>
<dbReference type="PDBsum" id="1MI2"/>
<dbReference type="PDBsum" id="3N52"/>
<dbReference type="SMR" id="P10889"/>
<dbReference type="BioGRID" id="203135">
    <property type="interactions" value="1"/>
</dbReference>
<dbReference type="DIP" id="DIP-61570N"/>
<dbReference type="FunCoup" id="P10889">
    <property type="interactions" value="1115"/>
</dbReference>
<dbReference type="IntAct" id="P10889">
    <property type="interactions" value="1"/>
</dbReference>
<dbReference type="STRING" id="10090.ENSMUSP00000074885"/>
<dbReference type="PaxDb" id="10090-ENSMUSP00000074885"/>
<dbReference type="ProteomicsDB" id="283986"/>
<dbReference type="ABCD" id="P10889">
    <property type="antibodies" value="2 sequenced antibodies"/>
</dbReference>
<dbReference type="DNASU" id="20310"/>
<dbReference type="Ensembl" id="ENSMUST00000075433.8">
    <property type="protein sequence ID" value="ENSMUSP00000074885.7"/>
    <property type="gene ID" value="ENSMUSG00000058427.11"/>
</dbReference>
<dbReference type="GeneID" id="20310"/>
<dbReference type="KEGG" id="mmu:20310"/>
<dbReference type="UCSC" id="uc008ybm.1">
    <property type="organism name" value="mouse"/>
</dbReference>
<dbReference type="AGR" id="MGI:1340094"/>
<dbReference type="CTD" id="2920"/>
<dbReference type="MGI" id="MGI:1340094">
    <property type="gene designation" value="Cxcl2"/>
</dbReference>
<dbReference type="VEuPathDB" id="HostDB:ENSMUSG00000058427"/>
<dbReference type="eggNOG" id="ENOG502S7MM">
    <property type="taxonomic scope" value="Eukaryota"/>
</dbReference>
<dbReference type="GeneTree" id="ENSGT00940000155233"/>
<dbReference type="InParanoid" id="P10889"/>
<dbReference type="OMA" id="HCKDVEV"/>
<dbReference type="OrthoDB" id="8872899at2759"/>
<dbReference type="PhylomeDB" id="P10889"/>
<dbReference type="TreeFam" id="TF333433"/>
<dbReference type="Reactome" id="R-MMU-380108">
    <property type="pathway name" value="Chemokine receptors bind chemokines"/>
</dbReference>
<dbReference type="Reactome" id="R-MMU-418594">
    <property type="pathway name" value="G alpha (i) signalling events"/>
</dbReference>
<dbReference type="BioGRID-ORCS" id="20310">
    <property type="hits" value="1 hit in 80 CRISPR screens"/>
</dbReference>
<dbReference type="EvolutionaryTrace" id="P10889"/>
<dbReference type="PRO" id="PR:P10889"/>
<dbReference type="Proteomes" id="UP000000589">
    <property type="component" value="Chromosome 5"/>
</dbReference>
<dbReference type="RNAct" id="P10889">
    <property type="molecule type" value="protein"/>
</dbReference>
<dbReference type="Bgee" id="ENSMUSG00000058427">
    <property type="expression patterns" value="Expressed in granulocyte and 40 other cell types or tissues"/>
</dbReference>
<dbReference type="ExpressionAtlas" id="P10889">
    <property type="expression patterns" value="baseline and differential"/>
</dbReference>
<dbReference type="GO" id="GO:0005615">
    <property type="term" value="C:extracellular space"/>
    <property type="evidence" value="ECO:0000314"/>
    <property type="project" value="MGI"/>
</dbReference>
<dbReference type="GO" id="GO:0008009">
    <property type="term" value="F:chemokine activity"/>
    <property type="evidence" value="ECO:0007669"/>
    <property type="project" value="Ensembl"/>
</dbReference>
<dbReference type="GO" id="GO:0071347">
    <property type="term" value="P:cellular response to interleukin-1"/>
    <property type="evidence" value="ECO:0007669"/>
    <property type="project" value="Ensembl"/>
</dbReference>
<dbReference type="GO" id="GO:0071222">
    <property type="term" value="P:cellular response to lipopolysaccharide"/>
    <property type="evidence" value="ECO:0007669"/>
    <property type="project" value="Ensembl"/>
</dbReference>
<dbReference type="GO" id="GO:0006955">
    <property type="term" value="P:immune response"/>
    <property type="evidence" value="ECO:0007669"/>
    <property type="project" value="InterPro"/>
</dbReference>
<dbReference type="GO" id="GO:0006954">
    <property type="term" value="P:inflammatory response"/>
    <property type="evidence" value="ECO:0007669"/>
    <property type="project" value="UniProtKB-KW"/>
</dbReference>
<dbReference type="GO" id="GO:0030593">
    <property type="term" value="P:neutrophil chemotaxis"/>
    <property type="evidence" value="ECO:0007669"/>
    <property type="project" value="Ensembl"/>
</dbReference>
<dbReference type="GO" id="GO:0007204">
    <property type="term" value="P:positive regulation of cytosolic calcium ion concentration"/>
    <property type="evidence" value="ECO:0007669"/>
    <property type="project" value="Ensembl"/>
</dbReference>
<dbReference type="GO" id="GO:0001975">
    <property type="term" value="P:response to amphetamine"/>
    <property type="evidence" value="ECO:0007669"/>
    <property type="project" value="Ensembl"/>
</dbReference>
<dbReference type="GO" id="GO:0032355">
    <property type="term" value="P:response to estradiol"/>
    <property type="evidence" value="ECO:0007669"/>
    <property type="project" value="Ensembl"/>
</dbReference>
<dbReference type="GO" id="GO:0010332">
    <property type="term" value="P:response to gamma radiation"/>
    <property type="evidence" value="ECO:0007669"/>
    <property type="project" value="Ensembl"/>
</dbReference>
<dbReference type="GO" id="GO:0051384">
    <property type="term" value="P:response to glucocorticoid"/>
    <property type="evidence" value="ECO:0007669"/>
    <property type="project" value="Ensembl"/>
</dbReference>
<dbReference type="GO" id="GO:0002237">
    <property type="term" value="P:response to molecule of bacterial origin"/>
    <property type="evidence" value="ECO:0000314"/>
    <property type="project" value="BHF-UCL"/>
</dbReference>
<dbReference type="CDD" id="cd00273">
    <property type="entry name" value="Chemokine_CXC"/>
    <property type="match status" value="1"/>
</dbReference>
<dbReference type="FunFam" id="2.40.50.40:FF:000004">
    <property type="entry name" value="C-X-C motif chemokine"/>
    <property type="match status" value="1"/>
</dbReference>
<dbReference type="Gene3D" id="2.40.50.40">
    <property type="match status" value="1"/>
</dbReference>
<dbReference type="InterPro" id="IPR039809">
    <property type="entry name" value="Chemokine_b/g/d"/>
</dbReference>
<dbReference type="InterPro" id="IPR001089">
    <property type="entry name" value="Chemokine_CXC"/>
</dbReference>
<dbReference type="InterPro" id="IPR018048">
    <property type="entry name" value="Chemokine_CXC_CS"/>
</dbReference>
<dbReference type="InterPro" id="IPR001811">
    <property type="entry name" value="Chemokine_IL8-like_dom"/>
</dbReference>
<dbReference type="InterPro" id="IPR033899">
    <property type="entry name" value="CXC_Chemokine_domain"/>
</dbReference>
<dbReference type="InterPro" id="IPR036048">
    <property type="entry name" value="Interleukin_8-like_sf"/>
</dbReference>
<dbReference type="PANTHER" id="PTHR12015:SF194">
    <property type="entry name" value="C-X-C MOTIF CHEMOKINE 2"/>
    <property type="match status" value="1"/>
</dbReference>
<dbReference type="PANTHER" id="PTHR12015">
    <property type="entry name" value="SMALL INDUCIBLE CYTOKINE A"/>
    <property type="match status" value="1"/>
</dbReference>
<dbReference type="Pfam" id="PF00048">
    <property type="entry name" value="IL8"/>
    <property type="match status" value="1"/>
</dbReference>
<dbReference type="PRINTS" id="PR00436">
    <property type="entry name" value="INTERLEUKIN8"/>
</dbReference>
<dbReference type="PRINTS" id="PR00437">
    <property type="entry name" value="SMALLCYTKCXC"/>
</dbReference>
<dbReference type="SMART" id="SM00199">
    <property type="entry name" value="SCY"/>
    <property type="match status" value="1"/>
</dbReference>
<dbReference type="SUPFAM" id="SSF54117">
    <property type="entry name" value="Interleukin 8-like chemokines"/>
    <property type="match status" value="1"/>
</dbReference>
<dbReference type="PROSITE" id="PS00471">
    <property type="entry name" value="SMALL_CYTOKINES_CXC"/>
    <property type="match status" value="1"/>
</dbReference>
<protein>
    <recommendedName>
        <fullName>C-X-C motif chemokine 2</fullName>
    </recommendedName>
    <alternativeName>
        <fullName>Macrophage inflammatory protein 2</fullName>
        <shortName>MIP2</shortName>
    </alternativeName>
</protein>
<keyword id="KW-0002">3D-structure</keyword>
<keyword id="KW-0145">Chemotaxis</keyword>
<keyword id="KW-0202">Cytokine</keyword>
<keyword id="KW-0903">Direct protein sequencing</keyword>
<keyword id="KW-1015">Disulfide bond</keyword>
<keyword id="KW-0395">Inflammatory response</keyword>
<keyword id="KW-1185">Reference proteome</keyword>
<keyword id="KW-0964">Secreted</keyword>
<keyword id="KW-0732">Signal</keyword>
<comment type="function">
    <text>Chemotactic for human polymorphonuclear leukocytes but does not induce chemokinesis or an oxidative burst.</text>
</comment>
<comment type="subunit">
    <text>Homotetramer.</text>
</comment>
<comment type="subcellular location">
    <subcellularLocation>
        <location>Secreted</location>
    </subcellularLocation>
</comment>
<comment type="similarity">
    <text evidence="2">Belongs to the intercrine alpha (chemokine CxC) family.</text>
</comment>
<sequence length="100" mass="10621">MAPPTCRLLSAALVLLLLLATNHQATGAVVASELRCQCLKTLPRVDFKNIQSLSVTPPGPHCAQTEVIATLKGGQKVCLDPEAPLVQKIIQKILNKGKAN</sequence>
<feature type="signal peptide" evidence="1">
    <location>
        <begin position="1"/>
        <end position="27"/>
    </location>
</feature>
<feature type="chain" id="PRO_0000005061" description="C-X-C motif chemokine 2">
    <location>
        <begin position="28"/>
        <end position="100"/>
    </location>
</feature>
<feature type="disulfide bond">
    <location>
        <begin position="36"/>
        <end position="62"/>
    </location>
</feature>
<feature type="disulfide bond">
    <location>
        <begin position="38"/>
        <end position="78"/>
    </location>
</feature>
<feature type="strand" evidence="3">
    <location>
        <begin position="32"/>
        <end position="35"/>
    </location>
</feature>
<feature type="strand" evidence="3">
    <location>
        <begin position="37"/>
        <end position="39"/>
    </location>
</feature>
<feature type="strand" evidence="3">
    <location>
        <begin position="42"/>
        <end position="44"/>
    </location>
</feature>
<feature type="helix" evidence="4">
    <location>
        <begin position="47"/>
        <end position="49"/>
    </location>
</feature>
<feature type="strand" evidence="4">
    <location>
        <begin position="50"/>
        <end position="56"/>
    </location>
</feature>
<feature type="turn" evidence="3">
    <location>
        <begin position="60"/>
        <end position="62"/>
    </location>
</feature>
<feature type="strand" evidence="4">
    <location>
        <begin position="66"/>
        <end position="71"/>
    </location>
</feature>
<feature type="strand" evidence="4">
    <location>
        <begin position="76"/>
        <end position="79"/>
    </location>
</feature>
<feature type="helix" evidence="4">
    <location>
        <begin position="84"/>
        <end position="94"/>
    </location>
</feature>
<evidence type="ECO:0000269" key="1">
    <source>
    </source>
</evidence>
<evidence type="ECO:0000305" key="2"/>
<evidence type="ECO:0007829" key="3">
    <source>
        <dbReference type="PDB" id="1MI2"/>
    </source>
</evidence>
<evidence type="ECO:0007829" key="4">
    <source>
        <dbReference type="PDB" id="3N52"/>
    </source>
</evidence>
<gene>
    <name type="primary">Cxcl2</name>
    <name type="synonym">Mip-2</name>
    <name type="synonym">Mip2</name>
    <name type="synonym">Scyb2</name>
</gene>
<reference key="1">
    <citation type="journal article" date="1990" name="J. Exp. Med.">
        <title>Cloning and characterization of cDNAs for murine macrophage inflammatory protein 2 and its human homologues.</title>
        <authorList>
            <person name="Tekamp-Olson P."/>
            <person name="Gallegos C."/>
            <person name="Bauer D."/>
            <person name="McClain J."/>
            <person name="Sherry B."/>
            <person name="Fabre M."/>
            <person name="van Deventer S."/>
            <person name="Cerami A."/>
        </authorList>
    </citation>
    <scope>NUCLEOTIDE SEQUENCE [MRNA]</scope>
</reference>
<reference key="2">
    <citation type="journal article" date="1989" name="Proc. Natl. Acad. Sci. U.S.A.">
        <title>Identification and characterization of macrophage inflammatory protein 2.</title>
        <authorList>
            <person name="Wolpe S.D."/>
            <person name="Sherry B."/>
            <person name="Juers D."/>
            <person name="Davatelis G."/>
            <person name="Yurt R.W."/>
            <person name="Cerami A."/>
        </authorList>
    </citation>
    <scope>PROTEIN SEQUENCE OF 28-59</scope>
</reference>
<reference key="3">
    <citation type="journal article" date="1998" name="Biochemistry">
        <title>Solution structure of murine macrophage inflammatory protein-2.</title>
        <authorList>
            <person name="Shao W."/>
            <person name="Jerva L.F."/>
            <person name="West J."/>
            <person name="Lolis E."/>
            <person name="Schweitzer B.I."/>
        </authorList>
    </citation>
    <scope>STRUCTURE BY NMR OF 28-100</scope>
</reference>
<proteinExistence type="evidence at protein level"/>
<name>CXCL2_MOUSE</name>